<reference key="1">
    <citation type="journal article" date="2009" name="PLoS Genet.">
        <title>Organised genome dynamics in the Escherichia coli species results in highly diverse adaptive paths.</title>
        <authorList>
            <person name="Touchon M."/>
            <person name="Hoede C."/>
            <person name="Tenaillon O."/>
            <person name="Barbe V."/>
            <person name="Baeriswyl S."/>
            <person name="Bidet P."/>
            <person name="Bingen E."/>
            <person name="Bonacorsi S."/>
            <person name="Bouchier C."/>
            <person name="Bouvet O."/>
            <person name="Calteau A."/>
            <person name="Chiapello H."/>
            <person name="Clermont O."/>
            <person name="Cruveiller S."/>
            <person name="Danchin A."/>
            <person name="Diard M."/>
            <person name="Dossat C."/>
            <person name="Karoui M.E."/>
            <person name="Frapy E."/>
            <person name="Garry L."/>
            <person name="Ghigo J.M."/>
            <person name="Gilles A.M."/>
            <person name="Johnson J."/>
            <person name="Le Bouguenec C."/>
            <person name="Lescat M."/>
            <person name="Mangenot S."/>
            <person name="Martinez-Jehanne V."/>
            <person name="Matic I."/>
            <person name="Nassif X."/>
            <person name="Oztas S."/>
            <person name="Petit M.A."/>
            <person name="Pichon C."/>
            <person name="Rouy Z."/>
            <person name="Ruf C.S."/>
            <person name="Schneider D."/>
            <person name="Tourret J."/>
            <person name="Vacherie B."/>
            <person name="Vallenet D."/>
            <person name="Medigue C."/>
            <person name="Rocha E.P.C."/>
            <person name="Denamur E."/>
        </authorList>
    </citation>
    <scope>NUCLEOTIDE SEQUENCE [LARGE SCALE GENOMIC DNA]</scope>
    <source>
        <strain>55989 / EAEC</strain>
    </source>
</reference>
<comment type="function">
    <text evidence="1">Condensation of UDP-2,3-diacylglucosamine and 2,3-diacylglucosamine-1-phosphate to form lipid A disaccharide, a precursor of lipid A, a phosphorylated glycolipid that anchors the lipopolysaccharide to the outer membrane of the cell.</text>
</comment>
<comment type="catalytic activity">
    <reaction evidence="1">
        <text>2-N,3-O-bis[(3R)-3-hydroxytetradecanoyl]-alpha-D-glucosaminyl 1-phosphate + UDP-2-N,3-O-bis[(3R)-3-hydroxytetradecanoyl]-alpha-D-glucosamine = lipid A disaccharide (E. coli) + UDP + H(+)</text>
        <dbReference type="Rhea" id="RHEA:22668"/>
        <dbReference type="ChEBI" id="CHEBI:15378"/>
        <dbReference type="ChEBI" id="CHEBI:57957"/>
        <dbReference type="ChEBI" id="CHEBI:58223"/>
        <dbReference type="ChEBI" id="CHEBI:58466"/>
        <dbReference type="ChEBI" id="CHEBI:78847"/>
    </reaction>
</comment>
<comment type="catalytic activity">
    <reaction evidence="1">
        <text>a lipid X + a UDP-2-N,3-O-bis[(3R)-3-hydroxyacyl]-alpha-D-glucosamine = a lipid A disaccharide + UDP + H(+)</text>
        <dbReference type="Rhea" id="RHEA:67828"/>
        <dbReference type="ChEBI" id="CHEBI:15378"/>
        <dbReference type="ChEBI" id="CHEBI:58223"/>
        <dbReference type="ChEBI" id="CHEBI:137748"/>
        <dbReference type="ChEBI" id="CHEBI:176338"/>
        <dbReference type="ChEBI" id="CHEBI:176343"/>
        <dbReference type="EC" id="2.4.1.182"/>
    </reaction>
</comment>
<comment type="pathway">
    <text evidence="1">Glycolipid biosynthesis; lipid IV(A) biosynthesis; lipid IV(A) from (3R)-3-hydroxytetradecanoyl-[acyl-carrier-protein] and UDP-N-acetyl-alpha-D-glucosamine: step 5/6.</text>
</comment>
<comment type="similarity">
    <text evidence="1">Belongs to the LpxB family.</text>
</comment>
<organism>
    <name type="scientific">Escherichia coli (strain 55989 / EAEC)</name>
    <dbReference type="NCBI Taxonomy" id="585055"/>
    <lineage>
        <taxon>Bacteria</taxon>
        <taxon>Pseudomonadati</taxon>
        <taxon>Pseudomonadota</taxon>
        <taxon>Gammaproteobacteria</taxon>
        <taxon>Enterobacterales</taxon>
        <taxon>Enterobacteriaceae</taxon>
        <taxon>Escherichia</taxon>
    </lineage>
</organism>
<gene>
    <name evidence="1" type="primary">lpxB</name>
    <name type="ordered locus">EC55989_0176</name>
</gene>
<sequence>MTEQRPLTIALVAGETSGDILGAGLIRALKERVPNARFVGVAGPRMQAEGCEAWYEMEELAVMGIVEVLGRLRRLLHIRADLTKRFGELKPDVFVGIDAPDFNITLEGNLKKQGIKTIHYVSPSVWAWRQKRVFKIGRATDLVLAFLPFEKAFYDKYNVPCRFIGHTMADAMPLDPDKNAARDVLGIPHDAHCLALLPGSRGAEVEMLSADFLKTAQLLRQTYPDLEIVVPLVNAKRREQFERIKAEVAPDLSVHLLDGMGREAMVASDAALLASGTAALECMLAKCPMVVGYRMKPFTFWLAKRLVKTDYVSLPNLLAGRELVKELLQEECEPQKLAAALLPLLANGKTSHAMHDTFRELHQQIRCNADEQAAQAVLELAQ</sequence>
<dbReference type="EC" id="2.4.1.182" evidence="1"/>
<dbReference type="EMBL" id="CU928145">
    <property type="protein sequence ID" value="CAU96062.1"/>
    <property type="molecule type" value="Genomic_DNA"/>
</dbReference>
<dbReference type="RefSeq" id="WP_000139667.1">
    <property type="nucleotide sequence ID" value="NC_011748.1"/>
</dbReference>
<dbReference type="SMR" id="B7LGP4"/>
<dbReference type="CAZy" id="GT19">
    <property type="family name" value="Glycosyltransferase Family 19"/>
</dbReference>
<dbReference type="GeneID" id="75202005"/>
<dbReference type="KEGG" id="eck:EC55989_0176"/>
<dbReference type="HOGENOM" id="CLU_036577_3_0_6"/>
<dbReference type="UniPathway" id="UPA00359">
    <property type="reaction ID" value="UER00481"/>
</dbReference>
<dbReference type="Proteomes" id="UP000000746">
    <property type="component" value="Chromosome"/>
</dbReference>
<dbReference type="GO" id="GO:0016020">
    <property type="term" value="C:membrane"/>
    <property type="evidence" value="ECO:0007669"/>
    <property type="project" value="GOC"/>
</dbReference>
<dbReference type="GO" id="GO:0008915">
    <property type="term" value="F:lipid-A-disaccharide synthase activity"/>
    <property type="evidence" value="ECO:0007669"/>
    <property type="project" value="UniProtKB-UniRule"/>
</dbReference>
<dbReference type="GO" id="GO:0005543">
    <property type="term" value="F:phospholipid binding"/>
    <property type="evidence" value="ECO:0007669"/>
    <property type="project" value="TreeGrafter"/>
</dbReference>
<dbReference type="GO" id="GO:0009245">
    <property type="term" value="P:lipid A biosynthetic process"/>
    <property type="evidence" value="ECO:0007669"/>
    <property type="project" value="UniProtKB-UniRule"/>
</dbReference>
<dbReference type="CDD" id="cd01635">
    <property type="entry name" value="Glycosyltransferase_GTB-type"/>
    <property type="match status" value="1"/>
</dbReference>
<dbReference type="HAMAP" id="MF_00392">
    <property type="entry name" value="LpxB"/>
    <property type="match status" value="1"/>
</dbReference>
<dbReference type="InterPro" id="IPR003835">
    <property type="entry name" value="Glyco_trans_19"/>
</dbReference>
<dbReference type="NCBIfam" id="TIGR00215">
    <property type="entry name" value="lpxB"/>
    <property type="match status" value="1"/>
</dbReference>
<dbReference type="PANTHER" id="PTHR30372">
    <property type="entry name" value="LIPID-A-DISACCHARIDE SYNTHASE"/>
    <property type="match status" value="1"/>
</dbReference>
<dbReference type="PANTHER" id="PTHR30372:SF4">
    <property type="entry name" value="LIPID-A-DISACCHARIDE SYNTHASE, MITOCHONDRIAL-RELATED"/>
    <property type="match status" value="1"/>
</dbReference>
<dbReference type="Pfam" id="PF02684">
    <property type="entry name" value="LpxB"/>
    <property type="match status" value="1"/>
</dbReference>
<dbReference type="SUPFAM" id="SSF53756">
    <property type="entry name" value="UDP-Glycosyltransferase/glycogen phosphorylase"/>
    <property type="match status" value="1"/>
</dbReference>
<keyword id="KW-0328">Glycosyltransferase</keyword>
<keyword id="KW-0441">Lipid A biosynthesis</keyword>
<keyword id="KW-0444">Lipid biosynthesis</keyword>
<keyword id="KW-0443">Lipid metabolism</keyword>
<keyword id="KW-1185">Reference proteome</keyword>
<keyword id="KW-0808">Transferase</keyword>
<accession>B7LGP4</accession>
<evidence type="ECO:0000255" key="1">
    <source>
        <dbReference type="HAMAP-Rule" id="MF_00392"/>
    </source>
</evidence>
<feature type="chain" id="PRO_1000191474" description="Lipid-A-disaccharide synthase">
    <location>
        <begin position="1"/>
        <end position="382"/>
    </location>
</feature>
<name>LPXB_ECO55</name>
<protein>
    <recommendedName>
        <fullName evidence="1">Lipid-A-disaccharide synthase</fullName>
        <ecNumber evidence="1">2.4.1.182</ecNumber>
    </recommendedName>
</protein>
<proteinExistence type="inferred from homology"/>